<proteinExistence type="inferred from homology"/>
<evidence type="ECO:0000255" key="1">
    <source>
        <dbReference type="HAMAP-Rule" id="MF_01456"/>
    </source>
</evidence>
<evidence type="ECO:0000305" key="2"/>
<sequence length="100" mass="11173">MLEHVLIISAYLFSIGIYGLITSRNMVRALMCLELILNAVNMNFVTFSDFFDSRQLKGNIFSIFVIAIAAAEAAIGPAILSSIYRNRKSTRINQSNLLNK</sequence>
<keyword id="KW-0150">Chloroplast</keyword>
<keyword id="KW-0472">Membrane</keyword>
<keyword id="KW-0520">NAD</keyword>
<keyword id="KW-0521">NADP</keyword>
<keyword id="KW-0934">Plastid</keyword>
<keyword id="KW-0618">Plastoquinone</keyword>
<keyword id="KW-0874">Quinone</keyword>
<keyword id="KW-0793">Thylakoid</keyword>
<keyword id="KW-1278">Translocase</keyword>
<keyword id="KW-0812">Transmembrane</keyword>
<keyword id="KW-1133">Transmembrane helix</keyword>
<keyword id="KW-0813">Transport</keyword>
<comment type="function">
    <text evidence="1">NDH shuttles electrons from NAD(P)H:plastoquinone, via FMN and iron-sulfur (Fe-S) centers, to quinones in the photosynthetic chain and possibly in a chloroplast respiratory chain. The immediate electron acceptor for the enzyme in this species is believed to be plastoquinone. Couples the redox reaction to proton translocation, and thus conserves the redox energy in a proton gradient.</text>
</comment>
<comment type="catalytic activity">
    <reaction evidence="1">
        <text>a plastoquinone + NADH + (n+1) H(+)(in) = a plastoquinol + NAD(+) + n H(+)(out)</text>
        <dbReference type="Rhea" id="RHEA:42608"/>
        <dbReference type="Rhea" id="RHEA-COMP:9561"/>
        <dbReference type="Rhea" id="RHEA-COMP:9562"/>
        <dbReference type="ChEBI" id="CHEBI:15378"/>
        <dbReference type="ChEBI" id="CHEBI:17757"/>
        <dbReference type="ChEBI" id="CHEBI:57540"/>
        <dbReference type="ChEBI" id="CHEBI:57945"/>
        <dbReference type="ChEBI" id="CHEBI:62192"/>
    </reaction>
</comment>
<comment type="catalytic activity">
    <reaction evidence="1">
        <text>a plastoquinone + NADPH + (n+1) H(+)(in) = a plastoquinol + NADP(+) + n H(+)(out)</text>
        <dbReference type="Rhea" id="RHEA:42612"/>
        <dbReference type="Rhea" id="RHEA-COMP:9561"/>
        <dbReference type="Rhea" id="RHEA-COMP:9562"/>
        <dbReference type="ChEBI" id="CHEBI:15378"/>
        <dbReference type="ChEBI" id="CHEBI:17757"/>
        <dbReference type="ChEBI" id="CHEBI:57783"/>
        <dbReference type="ChEBI" id="CHEBI:58349"/>
        <dbReference type="ChEBI" id="CHEBI:62192"/>
    </reaction>
</comment>
<comment type="subunit">
    <text evidence="1">NDH is composed of at least 16 different subunits, 5 of which are encoded in the nucleus.</text>
</comment>
<comment type="subcellular location">
    <subcellularLocation>
        <location evidence="1">Plastid</location>
        <location evidence="1">Chloroplast thylakoid membrane</location>
        <topology evidence="1">Multi-pass membrane protein</topology>
    </subcellularLocation>
</comment>
<comment type="similarity">
    <text evidence="1">Belongs to the complex I subunit 4L family.</text>
</comment>
<comment type="sequence caution" evidence="2">
    <conflict type="erroneous initiation">
        <sequence resource="EMBL-CDS" id="ABI97465"/>
    </conflict>
</comment>
<comment type="sequence caution" evidence="2">
    <conflict type="erroneous initiation">
        <sequence resource="EMBL-CDS" id="ABI98796"/>
    </conflict>
</comment>
<feature type="chain" id="PRO_0000360322" description="NAD(P)H-quinone oxidoreductase subunit 4L, chloroplastic">
    <location>
        <begin position="1"/>
        <end position="100"/>
    </location>
</feature>
<feature type="transmembrane region" description="Helical" evidence="1">
    <location>
        <begin position="1"/>
        <end position="21"/>
    </location>
</feature>
<feature type="transmembrane region" description="Helical" evidence="1">
    <location>
        <begin position="31"/>
        <end position="51"/>
    </location>
</feature>
<feature type="transmembrane region" description="Helical" evidence="1">
    <location>
        <begin position="60"/>
        <end position="80"/>
    </location>
</feature>
<feature type="sequence variant" description="In strain: cv. Borszczagowski.">
    <original>I</original>
    <variation>T</variation>
    <location>
        <position position="83"/>
    </location>
</feature>
<organism>
    <name type="scientific">Cucumis sativus</name>
    <name type="common">Cucumber</name>
    <dbReference type="NCBI Taxonomy" id="3659"/>
    <lineage>
        <taxon>Eukaryota</taxon>
        <taxon>Viridiplantae</taxon>
        <taxon>Streptophyta</taxon>
        <taxon>Embryophyta</taxon>
        <taxon>Tracheophyta</taxon>
        <taxon>Spermatophyta</taxon>
        <taxon>Magnoliopsida</taxon>
        <taxon>eudicotyledons</taxon>
        <taxon>Gunneridae</taxon>
        <taxon>Pentapetalae</taxon>
        <taxon>rosids</taxon>
        <taxon>fabids</taxon>
        <taxon>Cucurbitales</taxon>
        <taxon>Cucurbitaceae</taxon>
        <taxon>Benincaseae</taxon>
        <taxon>Cucumis</taxon>
    </lineage>
</organism>
<geneLocation type="chloroplast"/>
<name>NU4LC_CUCSA</name>
<gene>
    <name evidence="1" type="primary">ndhE</name>
    <name type="ordered locus">CsCp107</name>
</gene>
<protein>
    <recommendedName>
        <fullName evidence="1">NAD(P)H-quinone oxidoreductase subunit 4L, chloroplastic</fullName>
        <ecNumber evidence="1">7.1.1.-</ecNumber>
    </recommendedName>
    <alternativeName>
        <fullName evidence="1">NAD(P)H dehydrogenase subunit 4L</fullName>
    </alternativeName>
    <alternativeName>
        <fullName evidence="1">NADH-plastoquinone oxidoreductase subunit 4L</fullName>
    </alternativeName>
</protein>
<reference key="1">
    <citation type="journal article" date="2006" name="Plant Cell Rep.">
        <title>Complete sequence and organization of the cucumber (Cucumis sativus L. cv. Baekmibaekdadagi) chloroplast genome.</title>
        <authorList>
            <person name="Kim J.-S."/>
            <person name="Jung J.D."/>
            <person name="Lee J.-A."/>
            <person name="Park H.-W."/>
            <person name="Oh K.-H."/>
            <person name="Jeong W.J."/>
            <person name="Choi D.-W."/>
            <person name="Liu J.R."/>
            <person name="Cho K.Y."/>
        </authorList>
    </citation>
    <scope>NUCLEOTIDE SEQUENCE [LARGE SCALE GENOMIC DNA]</scope>
    <source>
        <strain>cv. Baekmibaekdadagi</strain>
    </source>
</reference>
<reference key="2">
    <citation type="journal article" date="2007" name="Cell. Mol. Biol. Lett.">
        <title>The complete structure of the cucumber (Cucumis sativus L.) chloroplast genome: its composition and comparative analysis.</title>
        <authorList>
            <person name="Plader W.W."/>
            <person name="Yukawa Y."/>
            <person name="Sugiura M."/>
            <person name="Malepszy S."/>
        </authorList>
    </citation>
    <scope>NUCLEOTIDE SEQUENCE [LARGE SCALE GENOMIC DNA]</scope>
    <source>
        <strain>cv. Borszczagowski</strain>
    </source>
</reference>
<reference key="3">
    <citation type="journal article" date="2007" name="Genome">
        <title>Sequencing cucumber (Cucumis sativus L.) chloroplast genomes identifies differences between chilling-tolerant and -susceptible cucumber lines.</title>
        <authorList>
            <person name="Chung S.-M."/>
            <person name="Gordon V.S."/>
            <person name="Staub J.E."/>
        </authorList>
    </citation>
    <scope>NUCLEOTIDE SEQUENCE [LARGE SCALE GENOMIC DNA]</scope>
    <source>
        <strain>cv. Chipper</strain>
        <strain>cv. Gy14</strain>
    </source>
</reference>
<accession>Q2QD39</accession>
<accession>A5J1Y5</accession>
<accession>Q4VZL6</accession>
<dbReference type="EC" id="7.1.1.-" evidence="1"/>
<dbReference type="EMBL" id="DQ119058">
    <property type="protein sequence ID" value="AAZ94700.1"/>
    <property type="molecule type" value="Genomic_DNA"/>
</dbReference>
<dbReference type="EMBL" id="AJ970307">
    <property type="protein sequence ID" value="CAJ00811.1"/>
    <property type="molecule type" value="Genomic_DNA"/>
</dbReference>
<dbReference type="EMBL" id="DQ865975">
    <property type="protein sequence ID" value="ABI97465.1"/>
    <property type="status" value="ALT_INIT"/>
    <property type="molecule type" value="Genomic_DNA"/>
</dbReference>
<dbReference type="EMBL" id="DQ865976">
    <property type="protein sequence ID" value="ABI98796.1"/>
    <property type="status" value="ALT_INIT"/>
    <property type="molecule type" value="Genomic_DNA"/>
</dbReference>
<dbReference type="RefSeq" id="YP_247652.2">
    <property type="nucleotide sequence ID" value="NC_007144.1"/>
</dbReference>
<dbReference type="SMR" id="Q2QD39"/>
<dbReference type="GeneID" id="3429257"/>
<dbReference type="KEGG" id="csv:3429257"/>
<dbReference type="eggNOG" id="KOG4669">
    <property type="taxonomic scope" value="Eukaryota"/>
</dbReference>
<dbReference type="OrthoDB" id="1925110at2759"/>
<dbReference type="GO" id="GO:0009535">
    <property type="term" value="C:chloroplast thylakoid membrane"/>
    <property type="evidence" value="ECO:0007669"/>
    <property type="project" value="UniProtKB-SubCell"/>
</dbReference>
<dbReference type="GO" id="GO:0016655">
    <property type="term" value="F:oxidoreductase activity, acting on NAD(P)H, quinone or similar compound as acceptor"/>
    <property type="evidence" value="ECO:0007669"/>
    <property type="project" value="UniProtKB-UniRule"/>
</dbReference>
<dbReference type="GO" id="GO:0048038">
    <property type="term" value="F:quinone binding"/>
    <property type="evidence" value="ECO:0007669"/>
    <property type="project" value="UniProtKB-KW"/>
</dbReference>
<dbReference type="GO" id="GO:0042773">
    <property type="term" value="P:ATP synthesis coupled electron transport"/>
    <property type="evidence" value="ECO:0007669"/>
    <property type="project" value="InterPro"/>
</dbReference>
<dbReference type="GO" id="GO:0019684">
    <property type="term" value="P:photosynthesis, light reaction"/>
    <property type="evidence" value="ECO:0007669"/>
    <property type="project" value="UniProtKB-UniRule"/>
</dbReference>
<dbReference type="FunFam" id="1.10.287.3510:FF:000001">
    <property type="entry name" value="NADH-quinone oxidoreductase subunit K"/>
    <property type="match status" value="1"/>
</dbReference>
<dbReference type="Gene3D" id="1.10.287.3510">
    <property type="match status" value="1"/>
</dbReference>
<dbReference type="HAMAP" id="MF_01456">
    <property type="entry name" value="NDH1_NuoK"/>
    <property type="match status" value="1"/>
</dbReference>
<dbReference type="InterPro" id="IPR001133">
    <property type="entry name" value="NADH_UbQ_OxRdtase_chain4L/K"/>
</dbReference>
<dbReference type="InterPro" id="IPR039428">
    <property type="entry name" value="NUOK/Mnh_C1-like"/>
</dbReference>
<dbReference type="NCBIfam" id="NF004320">
    <property type="entry name" value="PRK05715.1-2"/>
    <property type="match status" value="1"/>
</dbReference>
<dbReference type="NCBIfam" id="NF004322">
    <property type="entry name" value="PRK05715.1-4"/>
    <property type="match status" value="1"/>
</dbReference>
<dbReference type="NCBIfam" id="NF004323">
    <property type="entry name" value="PRK05715.1-5"/>
    <property type="match status" value="1"/>
</dbReference>
<dbReference type="PANTHER" id="PTHR11434:SF16">
    <property type="entry name" value="NADH-UBIQUINONE OXIDOREDUCTASE CHAIN 4L"/>
    <property type="match status" value="1"/>
</dbReference>
<dbReference type="PANTHER" id="PTHR11434">
    <property type="entry name" value="NADH-UBIQUINONE OXIDOREDUCTASE SUBUNIT ND4L"/>
    <property type="match status" value="1"/>
</dbReference>
<dbReference type="Pfam" id="PF00420">
    <property type="entry name" value="Oxidored_q2"/>
    <property type="match status" value="1"/>
</dbReference>